<gene>
    <name evidence="1" type="primary">iraM</name>
    <name evidence="1" type="synonym">rssC</name>
    <name type="ordered locus">SCH_1060</name>
</gene>
<proteinExistence type="inferred from homology"/>
<organism>
    <name type="scientific">Salmonella choleraesuis (strain SC-B67)</name>
    <dbReference type="NCBI Taxonomy" id="321314"/>
    <lineage>
        <taxon>Bacteria</taxon>
        <taxon>Pseudomonadati</taxon>
        <taxon>Pseudomonadota</taxon>
        <taxon>Gammaproteobacteria</taxon>
        <taxon>Enterobacterales</taxon>
        <taxon>Enterobacteriaceae</taxon>
        <taxon>Salmonella</taxon>
    </lineage>
</organism>
<keyword id="KW-0963">Cytoplasm</keyword>
<keyword id="KW-0346">Stress response</keyword>
<name>IRAM_SALCH</name>
<reference key="1">
    <citation type="journal article" date="2005" name="Nucleic Acids Res.">
        <title>The genome sequence of Salmonella enterica serovar Choleraesuis, a highly invasive and resistant zoonotic pathogen.</title>
        <authorList>
            <person name="Chiu C.-H."/>
            <person name="Tang P."/>
            <person name="Chu C."/>
            <person name="Hu S."/>
            <person name="Bao Q."/>
            <person name="Yu J."/>
            <person name="Chou Y.-Y."/>
            <person name="Wang H.-S."/>
            <person name="Lee Y.-S."/>
        </authorList>
    </citation>
    <scope>NUCLEOTIDE SEQUENCE [LARGE SCALE GENOMIC DNA]</scope>
    <source>
        <strain>SC-B67</strain>
    </source>
</reference>
<evidence type="ECO:0000255" key="1">
    <source>
        <dbReference type="HAMAP-Rule" id="MF_01199"/>
    </source>
</evidence>
<comment type="function">
    <text evidence="1">Involved in the stabilization of the sigma stress factor RpoS.</text>
</comment>
<comment type="subcellular location">
    <subcellularLocation>
        <location evidence="1">Cytoplasm</location>
    </subcellularLocation>
</comment>
<comment type="similarity">
    <text evidence="1">Belongs to the IraM/RssC family.</text>
</comment>
<protein>
    <recommendedName>
        <fullName evidence="1">Anti-adapter protein IraM</fullName>
    </recommendedName>
    <alternativeName>
        <fullName evidence="1">Sigma S-regulator RssC</fullName>
    </alternativeName>
</protein>
<feature type="chain" id="PRO_0000337884" description="Anti-adapter protein IraM">
    <location>
        <begin position="1"/>
        <end position="120"/>
    </location>
</feature>
<accession>Q57QP5</accession>
<sequence length="120" mass="13579">MEWKVVDTVISPSTGVSFSCIHSLKNLRLTLWYQADVYMPPGSIIIPFNKGVLINDKLYPVTVYNVTRFNPVLWKSLKENSHCPGNCNPKPEACSYPFECLVSVCPFGLTRNIQIDNKKV</sequence>
<dbReference type="EMBL" id="AE017220">
    <property type="protein sequence ID" value="AAX64966.1"/>
    <property type="molecule type" value="Genomic_DNA"/>
</dbReference>
<dbReference type="RefSeq" id="WP_001537781.1">
    <property type="nucleotide sequence ID" value="NC_006905.1"/>
</dbReference>
<dbReference type="SMR" id="Q57QP5"/>
<dbReference type="KEGG" id="sec:SCH_1060"/>
<dbReference type="HOGENOM" id="CLU_143527_1_0_6"/>
<dbReference type="Proteomes" id="UP000000538">
    <property type="component" value="Chromosome"/>
</dbReference>
<dbReference type="GO" id="GO:0005737">
    <property type="term" value="C:cytoplasm"/>
    <property type="evidence" value="ECO:0007669"/>
    <property type="project" value="UniProtKB-SubCell"/>
</dbReference>
<dbReference type="GO" id="GO:0009267">
    <property type="term" value="P:cellular response to starvation"/>
    <property type="evidence" value="ECO:0007669"/>
    <property type="project" value="UniProtKB-UniRule"/>
</dbReference>
<dbReference type="Gene3D" id="2.40.50.650">
    <property type="match status" value="1"/>
</dbReference>
<dbReference type="HAMAP" id="MF_01199">
    <property type="entry name" value="Anti_adapt_IraM"/>
    <property type="match status" value="1"/>
</dbReference>
<dbReference type="InterPro" id="IPR014448">
    <property type="entry name" value="Anti-adapter_IraM"/>
</dbReference>
<dbReference type="InterPro" id="IPR038679">
    <property type="entry name" value="PmrD_sf"/>
</dbReference>
<dbReference type="NCBIfam" id="NF007393">
    <property type="entry name" value="PRK09919.1"/>
    <property type="match status" value="1"/>
</dbReference>
<dbReference type="PIRSF" id="PIRSF007036">
    <property type="entry name" value="Elb1"/>
    <property type="match status" value="1"/>
</dbReference>